<proteinExistence type="inferred from homology"/>
<feature type="chain" id="PRO_1000059740" description="ATP-dependent 6-phosphofructokinase">
    <location>
        <begin position="1"/>
        <end position="319"/>
    </location>
</feature>
<feature type="active site" description="Proton acceptor" evidence="1">
    <location>
        <position position="127"/>
    </location>
</feature>
<feature type="binding site" evidence="1">
    <location>
        <position position="11"/>
    </location>
    <ligand>
        <name>ATP</name>
        <dbReference type="ChEBI" id="CHEBI:30616"/>
    </ligand>
</feature>
<feature type="binding site" evidence="1">
    <location>
        <begin position="21"/>
        <end position="25"/>
    </location>
    <ligand>
        <name>ADP</name>
        <dbReference type="ChEBI" id="CHEBI:456216"/>
        <note>allosteric activator; ligand shared between dimeric partners</note>
    </ligand>
</feature>
<feature type="binding site" evidence="1">
    <location>
        <begin position="72"/>
        <end position="73"/>
    </location>
    <ligand>
        <name>ATP</name>
        <dbReference type="ChEBI" id="CHEBI:30616"/>
    </ligand>
</feature>
<feature type="binding site" evidence="1">
    <location>
        <begin position="102"/>
        <end position="105"/>
    </location>
    <ligand>
        <name>ATP</name>
        <dbReference type="ChEBI" id="CHEBI:30616"/>
    </ligand>
</feature>
<feature type="binding site" evidence="1">
    <location>
        <position position="103"/>
    </location>
    <ligand>
        <name>Mg(2+)</name>
        <dbReference type="ChEBI" id="CHEBI:18420"/>
        <note>catalytic</note>
    </ligand>
</feature>
<feature type="binding site" description="in other chain" evidence="1">
    <location>
        <begin position="125"/>
        <end position="127"/>
    </location>
    <ligand>
        <name>substrate</name>
        <note>ligand shared between dimeric partners</note>
    </ligand>
</feature>
<feature type="binding site" description="in other chain" evidence="1">
    <location>
        <position position="154"/>
    </location>
    <ligand>
        <name>ADP</name>
        <dbReference type="ChEBI" id="CHEBI:456216"/>
        <note>allosteric activator; ligand shared between dimeric partners</note>
    </ligand>
</feature>
<feature type="binding site" evidence="1">
    <location>
        <position position="162"/>
    </location>
    <ligand>
        <name>substrate</name>
        <note>ligand shared between dimeric partners</note>
    </ligand>
</feature>
<feature type="binding site" description="in other chain" evidence="1">
    <location>
        <begin position="169"/>
        <end position="171"/>
    </location>
    <ligand>
        <name>substrate</name>
        <note>ligand shared between dimeric partners</note>
    </ligand>
</feature>
<feature type="binding site" description="in other chain" evidence="1">
    <location>
        <begin position="185"/>
        <end position="187"/>
    </location>
    <ligand>
        <name>ADP</name>
        <dbReference type="ChEBI" id="CHEBI:456216"/>
        <note>allosteric activator; ligand shared between dimeric partners</note>
    </ligand>
</feature>
<feature type="binding site" description="in other chain" evidence="1">
    <location>
        <position position="211"/>
    </location>
    <ligand>
        <name>ADP</name>
        <dbReference type="ChEBI" id="CHEBI:456216"/>
        <note>allosteric activator; ligand shared between dimeric partners</note>
    </ligand>
</feature>
<feature type="binding site" description="in other chain" evidence="1">
    <location>
        <begin position="213"/>
        <end position="215"/>
    </location>
    <ligand>
        <name>ADP</name>
        <dbReference type="ChEBI" id="CHEBI:456216"/>
        <note>allosteric activator; ligand shared between dimeric partners</note>
    </ligand>
</feature>
<feature type="binding site" description="in other chain" evidence="1">
    <location>
        <position position="222"/>
    </location>
    <ligand>
        <name>substrate</name>
        <note>ligand shared between dimeric partners</note>
    </ligand>
</feature>
<feature type="binding site" evidence="1">
    <location>
        <position position="243"/>
    </location>
    <ligand>
        <name>substrate</name>
        <note>ligand shared between dimeric partners</note>
    </ligand>
</feature>
<feature type="binding site" description="in other chain" evidence="1">
    <location>
        <begin position="249"/>
        <end position="252"/>
    </location>
    <ligand>
        <name>substrate</name>
        <note>ligand shared between dimeric partners</note>
    </ligand>
</feature>
<reference key="1">
    <citation type="journal article" date="2004" name="Nucleic Acids Res.">
        <title>The genome sequence of Bacillus cereus ATCC 10987 reveals metabolic adaptations and a large plasmid related to Bacillus anthracis pXO1.</title>
        <authorList>
            <person name="Rasko D.A."/>
            <person name="Ravel J."/>
            <person name="Oekstad O.A."/>
            <person name="Helgason E."/>
            <person name="Cer R.Z."/>
            <person name="Jiang L."/>
            <person name="Shores K.A."/>
            <person name="Fouts D.E."/>
            <person name="Tourasse N.J."/>
            <person name="Angiuoli S.V."/>
            <person name="Kolonay J.F."/>
            <person name="Nelson W.C."/>
            <person name="Kolstoe A.-B."/>
            <person name="Fraser C.M."/>
            <person name="Read T.D."/>
        </authorList>
    </citation>
    <scope>NUCLEOTIDE SEQUENCE [LARGE SCALE GENOMIC DNA]</scope>
    <source>
        <strain>ATCC 10987 / NRS 248</strain>
    </source>
</reference>
<sequence length="319" mass="34308">MKRIGVLTSGGDSPGMNAAIRAVVRKAIFHDIEVYGIYHGYAGLISGHIEKLELGSVGDIIHRGGTKLYTARCPEFKDPEVRLKGIEQLKKHGIEGLVVIGGDGSYQGAKKLTEQGFPCVGVPGTIDNDIPGTDFTIGFDTALNTVIDAIDKIRDTATSHERTYVIEVMGRHAGDIALWAGLADGAETILIPEEEYDMEDVIARLKRGSERGKKHSIIVVAEGVGSAIDIGKHIEEATNFDTRVTVLGHVQRGGSPSAQDRVLASRLGARAVELLIAGKGGRCVGIQDNKLVDHDIIEALAQKHTIDKDMYQLSKELSI</sequence>
<keyword id="KW-0021">Allosteric enzyme</keyword>
<keyword id="KW-0067">ATP-binding</keyword>
<keyword id="KW-0963">Cytoplasm</keyword>
<keyword id="KW-0324">Glycolysis</keyword>
<keyword id="KW-0418">Kinase</keyword>
<keyword id="KW-0460">Magnesium</keyword>
<keyword id="KW-0479">Metal-binding</keyword>
<keyword id="KW-0547">Nucleotide-binding</keyword>
<keyword id="KW-0808">Transferase</keyword>
<protein>
    <recommendedName>
        <fullName evidence="1">ATP-dependent 6-phosphofructokinase</fullName>
        <shortName evidence="1">ATP-PFK</shortName>
        <shortName evidence="1">Phosphofructokinase</shortName>
        <ecNumber evidence="1">2.7.1.11</ecNumber>
    </recommendedName>
    <alternativeName>
        <fullName evidence="1">Phosphohexokinase</fullName>
    </alternativeName>
</protein>
<evidence type="ECO:0000255" key="1">
    <source>
        <dbReference type="HAMAP-Rule" id="MF_00339"/>
    </source>
</evidence>
<organism>
    <name type="scientific">Bacillus cereus (strain ATCC 10987 / NRS 248)</name>
    <dbReference type="NCBI Taxonomy" id="222523"/>
    <lineage>
        <taxon>Bacteria</taxon>
        <taxon>Bacillati</taxon>
        <taxon>Bacillota</taxon>
        <taxon>Bacilli</taxon>
        <taxon>Bacillales</taxon>
        <taxon>Bacillaceae</taxon>
        <taxon>Bacillus</taxon>
        <taxon>Bacillus cereus group</taxon>
    </lineage>
</organism>
<gene>
    <name evidence="1" type="primary">pfkA</name>
    <name type="ordered locus">BCE_4730</name>
</gene>
<accession>Q72ZD8</accession>
<name>PFKA_BACC1</name>
<dbReference type="EC" id="2.7.1.11" evidence="1"/>
<dbReference type="EMBL" id="AE017194">
    <property type="protein sequence ID" value="AAS43631.1"/>
    <property type="molecule type" value="Genomic_DNA"/>
</dbReference>
<dbReference type="SMR" id="Q72ZD8"/>
<dbReference type="KEGG" id="bca:BCE_4730"/>
<dbReference type="HOGENOM" id="CLU_020655_0_1_9"/>
<dbReference type="UniPathway" id="UPA00109">
    <property type="reaction ID" value="UER00182"/>
</dbReference>
<dbReference type="Proteomes" id="UP000002527">
    <property type="component" value="Chromosome"/>
</dbReference>
<dbReference type="GO" id="GO:0005945">
    <property type="term" value="C:6-phosphofructokinase complex"/>
    <property type="evidence" value="ECO:0007669"/>
    <property type="project" value="TreeGrafter"/>
</dbReference>
<dbReference type="GO" id="GO:0003872">
    <property type="term" value="F:6-phosphofructokinase activity"/>
    <property type="evidence" value="ECO:0007669"/>
    <property type="project" value="UniProtKB-UniRule"/>
</dbReference>
<dbReference type="GO" id="GO:0016208">
    <property type="term" value="F:AMP binding"/>
    <property type="evidence" value="ECO:0007669"/>
    <property type="project" value="TreeGrafter"/>
</dbReference>
<dbReference type="GO" id="GO:0005524">
    <property type="term" value="F:ATP binding"/>
    <property type="evidence" value="ECO:0007669"/>
    <property type="project" value="UniProtKB-KW"/>
</dbReference>
<dbReference type="GO" id="GO:0070095">
    <property type="term" value="F:fructose-6-phosphate binding"/>
    <property type="evidence" value="ECO:0007669"/>
    <property type="project" value="TreeGrafter"/>
</dbReference>
<dbReference type="GO" id="GO:0042802">
    <property type="term" value="F:identical protein binding"/>
    <property type="evidence" value="ECO:0007669"/>
    <property type="project" value="TreeGrafter"/>
</dbReference>
<dbReference type="GO" id="GO:0046872">
    <property type="term" value="F:metal ion binding"/>
    <property type="evidence" value="ECO:0007669"/>
    <property type="project" value="UniProtKB-KW"/>
</dbReference>
<dbReference type="GO" id="GO:0048029">
    <property type="term" value="F:monosaccharide binding"/>
    <property type="evidence" value="ECO:0007669"/>
    <property type="project" value="TreeGrafter"/>
</dbReference>
<dbReference type="GO" id="GO:0061621">
    <property type="term" value="P:canonical glycolysis"/>
    <property type="evidence" value="ECO:0007669"/>
    <property type="project" value="TreeGrafter"/>
</dbReference>
<dbReference type="GO" id="GO:0030388">
    <property type="term" value="P:fructose 1,6-bisphosphate metabolic process"/>
    <property type="evidence" value="ECO:0007669"/>
    <property type="project" value="TreeGrafter"/>
</dbReference>
<dbReference type="GO" id="GO:0006002">
    <property type="term" value="P:fructose 6-phosphate metabolic process"/>
    <property type="evidence" value="ECO:0007669"/>
    <property type="project" value="InterPro"/>
</dbReference>
<dbReference type="CDD" id="cd00763">
    <property type="entry name" value="Bacterial_PFK"/>
    <property type="match status" value="1"/>
</dbReference>
<dbReference type="FunFam" id="3.40.50.450:FF:000001">
    <property type="entry name" value="ATP-dependent 6-phosphofructokinase"/>
    <property type="match status" value="1"/>
</dbReference>
<dbReference type="FunFam" id="3.40.50.460:FF:000002">
    <property type="entry name" value="ATP-dependent 6-phosphofructokinase"/>
    <property type="match status" value="1"/>
</dbReference>
<dbReference type="Gene3D" id="3.40.50.450">
    <property type="match status" value="1"/>
</dbReference>
<dbReference type="Gene3D" id="3.40.50.460">
    <property type="entry name" value="Phosphofructokinase domain"/>
    <property type="match status" value="1"/>
</dbReference>
<dbReference type="HAMAP" id="MF_00339">
    <property type="entry name" value="Phosphofructokinase_I_B1"/>
    <property type="match status" value="1"/>
</dbReference>
<dbReference type="InterPro" id="IPR022953">
    <property type="entry name" value="ATP_PFK"/>
</dbReference>
<dbReference type="InterPro" id="IPR012003">
    <property type="entry name" value="ATP_PFK_prok-type"/>
</dbReference>
<dbReference type="InterPro" id="IPR012828">
    <property type="entry name" value="PFKA_ATP_prok"/>
</dbReference>
<dbReference type="InterPro" id="IPR015912">
    <property type="entry name" value="Phosphofructokinase_CS"/>
</dbReference>
<dbReference type="InterPro" id="IPR000023">
    <property type="entry name" value="Phosphofructokinase_dom"/>
</dbReference>
<dbReference type="InterPro" id="IPR035966">
    <property type="entry name" value="PKF_sf"/>
</dbReference>
<dbReference type="NCBIfam" id="TIGR02482">
    <property type="entry name" value="PFKA_ATP"/>
    <property type="match status" value="1"/>
</dbReference>
<dbReference type="NCBIfam" id="NF002872">
    <property type="entry name" value="PRK03202.1"/>
    <property type="match status" value="1"/>
</dbReference>
<dbReference type="PANTHER" id="PTHR13697:SF4">
    <property type="entry name" value="ATP-DEPENDENT 6-PHOSPHOFRUCTOKINASE"/>
    <property type="match status" value="1"/>
</dbReference>
<dbReference type="PANTHER" id="PTHR13697">
    <property type="entry name" value="PHOSPHOFRUCTOKINASE"/>
    <property type="match status" value="1"/>
</dbReference>
<dbReference type="Pfam" id="PF00365">
    <property type="entry name" value="PFK"/>
    <property type="match status" value="1"/>
</dbReference>
<dbReference type="PIRSF" id="PIRSF000532">
    <property type="entry name" value="ATP_PFK_prok"/>
    <property type="match status" value="1"/>
</dbReference>
<dbReference type="PRINTS" id="PR00476">
    <property type="entry name" value="PHFRCTKINASE"/>
</dbReference>
<dbReference type="SUPFAM" id="SSF53784">
    <property type="entry name" value="Phosphofructokinase"/>
    <property type="match status" value="1"/>
</dbReference>
<dbReference type="PROSITE" id="PS00433">
    <property type="entry name" value="PHOSPHOFRUCTOKINASE"/>
    <property type="match status" value="1"/>
</dbReference>
<comment type="function">
    <text evidence="1">Catalyzes the phosphorylation of D-fructose 6-phosphate to fructose 1,6-bisphosphate by ATP, the first committing step of glycolysis.</text>
</comment>
<comment type="catalytic activity">
    <reaction evidence="1">
        <text>beta-D-fructose 6-phosphate + ATP = beta-D-fructose 1,6-bisphosphate + ADP + H(+)</text>
        <dbReference type="Rhea" id="RHEA:16109"/>
        <dbReference type="ChEBI" id="CHEBI:15378"/>
        <dbReference type="ChEBI" id="CHEBI:30616"/>
        <dbReference type="ChEBI" id="CHEBI:32966"/>
        <dbReference type="ChEBI" id="CHEBI:57634"/>
        <dbReference type="ChEBI" id="CHEBI:456216"/>
        <dbReference type="EC" id="2.7.1.11"/>
    </reaction>
</comment>
<comment type="cofactor">
    <cofactor evidence="1">
        <name>Mg(2+)</name>
        <dbReference type="ChEBI" id="CHEBI:18420"/>
    </cofactor>
</comment>
<comment type="activity regulation">
    <text evidence="1">Allosterically activated by ADP and other diphosphonucleosides, and allosterically inhibited by phosphoenolpyruvate.</text>
</comment>
<comment type="pathway">
    <text evidence="1">Carbohydrate degradation; glycolysis; D-glyceraldehyde 3-phosphate and glycerone phosphate from D-glucose: step 3/4.</text>
</comment>
<comment type="subunit">
    <text evidence="1">Homotetramer.</text>
</comment>
<comment type="subcellular location">
    <subcellularLocation>
        <location evidence="1">Cytoplasm</location>
    </subcellularLocation>
</comment>
<comment type="similarity">
    <text evidence="1">Belongs to the phosphofructokinase type A (PFKA) family. ATP-dependent PFK group I subfamily. Prokaryotic clade 'B1' sub-subfamily.</text>
</comment>